<accession>Q54KD8</accession>
<dbReference type="EMBL" id="AAFI02000100">
    <property type="protein sequence ID" value="EAL63764.1"/>
    <property type="molecule type" value="Genomic_DNA"/>
</dbReference>
<dbReference type="RefSeq" id="XP_637285.1">
    <property type="nucleotide sequence ID" value="XM_632193.1"/>
</dbReference>
<dbReference type="SMR" id="Q54KD8"/>
<dbReference type="FunCoup" id="Q54KD8">
    <property type="interactions" value="641"/>
</dbReference>
<dbReference type="STRING" id="44689.Q54KD8"/>
<dbReference type="PaxDb" id="44689-DDB0232418"/>
<dbReference type="EnsemblProtists" id="EAL63764">
    <property type="protein sequence ID" value="EAL63764"/>
    <property type="gene ID" value="DDB_G0287393"/>
</dbReference>
<dbReference type="GeneID" id="8626116"/>
<dbReference type="KEGG" id="ddi:DDB_G0287393"/>
<dbReference type="dictyBase" id="DDB_G0287393">
    <property type="gene designation" value="mlh1"/>
</dbReference>
<dbReference type="VEuPathDB" id="AmoebaDB:DDB_G0287393"/>
<dbReference type="eggNOG" id="KOG1979">
    <property type="taxonomic scope" value="Eukaryota"/>
</dbReference>
<dbReference type="HOGENOM" id="CLU_004131_2_0_1"/>
<dbReference type="InParanoid" id="Q54KD8"/>
<dbReference type="OMA" id="ANYHVKK"/>
<dbReference type="PhylomeDB" id="Q54KD8"/>
<dbReference type="Reactome" id="R-DDI-5358565">
    <property type="pathway name" value="Mismatch repair (MMR) directed by MSH2:MSH6 (MutSalpha)"/>
</dbReference>
<dbReference type="PRO" id="PR:Q54KD8"/>
<dbReference type="Proteomes" id="UP000002195">
    <property type="component" value="Chromosome 5"/>
</dbReference>
<dbReference type="GO" id="GO:0032389">
    <property type="term" value="C:MutLalpha complex"/>
    <property type="evidence" value="ECO:0000318"/>
    <property type="project" value="GO_Central"/>
</dbReference>
<dbReference type="GO" id="GO:0005524">
    <property type="term" value="F:ATP binding"/>
    <property type="evidence" value="ECO:0000250"/>
    <property type="project" value="dictyBase"/>
</dbReference>
<dbReference type="GO" id="GO:0016887">
    <property type="term" value="F:ATP hydrolysis activity"/>
    <property type="evidence" value="ECO:0000318"/>
    <property type="project" value="GO_Central"/>
</dbReference>
<dbReference type="GO" id="GO:0140664">
    <property type="term" value="F:ATP-dependent DNA damage sensor activity"/>
    <property type="evidence" value="ECO:0007669"/>
    <property type="project" value="InterPro"/>
</dbReference>
<dbReference type="GO" id="GO:0030983">
    <property type="term" value="F:mismatched DNA binding"/>
    <property type="evidence" value="ECO:0007669"/>
    <property type="project" value="InterPro"/>
</dbReference>
<dbReference type="GO" id="GO:0032407">
    <property type="term" value="F:MutSalpha complex binding"/>
    <property type="evidence" value="ECO:0000250"/>
    <property type="project" value="dictyBase"/>
</dbReference>
<dbReference type="GO" id="GO:0006298">
    <property type="term" value="P:mismatch repair"/>
    <property type="evidence" value="ECO:0000318"/>
    <property type="project" value="GO_Central"/>
</dbReference>
<dbReference type="CDD" id="cd16926">
    <property type="entry name" value="HATPase_MutL-MLH-PMS-like"/>
    <property type="match status" value="1"/>
</dbReference>
<dbReference type="FunFam" id="3.30.230.10:FF:000014">
    <property type="entry name" value="DNA mismatch repair protein Mlh1"/>
    <property type="match status" value="1"/>
</dbReference>
<dbReference type="FunFam" id="3.30.565.10:FF:000109">
    <property type="entry name" value="Related to MLH1-DNA mismatch repair protein"/>
    <property type="match status" value="1"/>
</dbReference>
<dbReference type="Gene3D" id="3.30.230.10">
    <property type="match status" value="1"/>
</dbReference>
<dbReference type="Gene3D" id="3.30.565.10">
    <property type="entry name" value="Histidine kinase-like ATPase, C-terminal domain"/>
    <property type="match status" value="1"/>
</dbReference>
<dbReference type="InterPro" id="IPR014762">
    <property type="entry name" value="DNA_mismatch_repair_CS"/>
</dbReference>
<dbReference type="InterPro" id="IPR013507">
    <property type="entry name" value="DNA_mismatch_S5_2-like"/>
</dbReference>
<dbReference type="InterPro" id="IPR036890">
    <property type="entry name" value="HATPase_C_sf"/>
</dbReference>
<dbReference type="InterPro" id="IPR032189">
    <property type="entry name" value="Mlh1_C"/>
</dbReference>
<dbReference type="InterPro" id="IPR002099">
    <property type="entry name" value="MutL/Mlh/PMS"/>
</dbReference>
<dbReference type="InterPro" id="IPR038973">
    <property type="entry name" value="MutL/Mlh/Pms-like"/>
</dbReference>
<dbReference type="InterPro" id="IPR020568">
    <property type="entry name" value="Ribosomal_Su5_D2-typ_SF"/>
</dbReference>
<dbReference type="InterPro" id="IPR014721">
    <property type="entry name" value="Ribsml_uS5_D2-typ_fold_subgr"/>
</dbReference>
<dbReference type="NCBIfam" id="TIGR00585">
    <property type="entry name" value="mutl"/>
    <property type="match status" value="1"/>
</dbReference>
<dbReference type="PANTHER" id="PTHR10073">
    <property type="entry name" value="DNA MISMATCH REPAIR PROTEIN MLH, PMS, MUTL"/>
    <property type="match status" value="1"/>
</dbReference>
<dbReference type="PANTHER" id="PTHR10073:SF12">
    <property type="entry name" value="DNA MISMATCH REPAIR PROTEIN MLH1"/>
    <property type="match status" value="1"/>
</dbReference>
<dbReference type="Pfam" id="PF01119">
    <property type="entry name" value="DNA_mis_repair"/>
    <property type="match status" value="1"/>
</dbReference>
<dbReference type="Pfam" id="PF13589">
    <property type="entry name" value="HATPase_c_3"/>
    <property type="match status" value="1"/>
</dbReference>
<dbReference type="Pfam" id="PF16413">
    <property type="entry name" value="Mlh1_C"/>
    <property type="match status" value="1"/>
</dbReference>
<dbReference type="SMART" id="SM01340">
    <property type="entry name" value="DNA_mis_repair"/>
    <property type="match status" value="1"/>
</dbReference>
<dbReference type="SUPFAM" id="SSF55874">
    <property type="entry name" value="ATPase domain of HSP90 chaperone/DNA topoisomerase II/histidine kinase"/>
    <property type="match status" value="1"/>
</dbReference>
<dbReference type="SUPFAM" id="SSF54211">
    <property type="entry name" value="Ribosomal protein S5 domain 2-like"/>
    <property type="match status" value="1"/>
</dbReference>
<dbReference type="PROSITE" id="PS00058">
    <property type="entry name" value="DNA_MISMATCH_REPAIR_1"/>
    <property type="match status" value="1"/>
</dbReference>
<gene>
    <name type="primary">mlh1</name>
    <name type="ORF">DDB_G0287393</name>
</gene>
<reference key="1">
    <citation type="journal article" date="2005" name="Nature">
        <title>The genome of the social amoeba Dictyostelium discoideum.</title>
        <authorList>
            <person name="Eichinger L."/>
            <person name="Pachebat J.A."/>
            <person name="Gloeckner G."/>
            <person name="Rajandream M.A."/>
            <person name="Sucgang R."/>
            <person name="Berriman M."/>
            <person name="Song J."/>
            <person name="Olsen R."/>
            <person name="Szafranski K."/>
            <person name="Xu Q."/>
            <person name="Tunggal B."/>
            <person name="Kummerfeld S."/>
            <person name="Madera M."/>
            <person name="Konfortov B.A."/>
            <person name="Rivero F."/>
            <person name="Bankier A.T."/>
            <person name="Lehmann R."/>
            <person name="Hamlin N."/>
            <person name="Davies R."/>
            <person name="Gaudet P."/>
            <person name="Fey P."/>
            <person name="Pilcher K."/>
            <person name="Chen G."/>
            <person name="Saunders D."/>
            <person name="Sodergren E.J."/>
            <person name="Davis P."/>
            <person name="Kerhornou A."/>
            <person name="Nie X."/>
            <person name="Hall N."/>
            <person name="Anjard C."/>
            <person name="Hemphill L."/>
            <person name="Bason N."/>
            <person name="Farbrother P."/>
            <person name="Desany B."/>
            <person name="Just E."/>
            <person name="Morio T."/>
            <person name="Rost R."/>
            <person name="Churcher C.M."/>
            <person name="Cooper J."/>
            <person name="Haydock S."/>
            <person name="van Driessche N."/>
            <person name="Cronin A."/>
            <person name="Goodhead I."/>
            <person name="Muzny D.M."/>
            <person name="Mourier T."/>
            <person name="Pain A."/>
            <person name="Lu M."/>
            <person name="Harper D."/>
            <person name="Lindsay R."/>
            <person name="Hauser H."/>
            <person name="James K.D."/>
            <person name="Quiles M."/>
            <person name="Madan Babu M."/>
            <person name="Saito T."/>
            <person name="Buchrieser C."/>
            <person name="Wardroper A."/>
            <person name="Felder M."/>
            <person name="Thangavelu M."/>
            <person name="Johnson D."/>
            <person name="Knights A."/>
            <person name="Loulseged H."/>
            <person name="Mungall K.L."/>
            <person name="Oliver K."/>
            <person name="Price C."/>
            <person name="Quail M.A."/>
            <person name="Urushihara H."/>
            <person name="Hernandez J."/>
            <person name="Rabbinowitsch E."/>
            <person name="Steffen D."/>
            <person name="Sanders M."/>
            <person name="Ma J."/>
            <person name="Kohara Y."/>
            <person name="Sharp S."/>
            <person name="Simmonds M.N."/>
            <person name="Spiegler S."/>
            <person name="Tivey A."/>
            <person name="Sugano S."/>
            <person name="White B."/>
            <person name="Walker D."/>
            <person name="Woodward J.R."/>
            <person name="Winckler T."/>
            <person name="Tanaka Y."/>
            <person name="Shaulsky G."/>
            <person name="Schleicher M."/>
            <person name="Weinstock G.M."/>
            <person name="Rosenthal A."/>
            <person name="Cox E.C."/>
            <person name="Chisholm R.L."/>
            <person name="Gibbs R.A."/>
            <person name="Loomis W.F."/>
            <person name="Platzer M."/>
            <person name="Kay R.R."/>
            <person name="Williams J.G."/>
            <person name="Dear P.H."/>
            <person name="Noegel A.A."/>
            <person name="Barrell B.G."/>
            <person name="Kuspa A."/>
        </authorList>
    </citation>
    <scope>NUCLEOTIDE SEQUENCE [LARGE SCALE GENOMIC DNA]</scope>
    <source>
        <strain>AX4</strain>
    </source>
</reference>
<name>MLH1_DICDI</name>
<comment type="function">
    <text evidence="1">Heterodimerizes with pms1 to form MutL alpha, a component of the post-replicative DNA mismatch repair system (MMR). DNA repair is initiated by MutS alpha (msh2-msh6) or MutS beta (msh2-msh3) binding to a dsDNA mismatch, then MutL alpha is recruited to the heteroduplex. Assembly of the MutL-MutS-heteroduplex ternary complex in presence of rfc and pcna is sufficient to activate endonuclease activity of pms1. It introduces single-strand breaks near the mismatch and thus generates new entry points for the exonuclease exo1 to degrade the strand containing the mismatch (By similarity).</text>
</comment>
<comment type="subunit">
    <text evidence="1">Heterodimer of mlh1 and pms1 (MutL alpha), and mlh1 and mlh3 (MutL gamma). Forms a ternary complex with MutS alpha (msh2-msh6) or MutS beta (msh2-msh3). Interacts with exo1 (By similarity).</text>
</comment>
<comment type="subcellular location">
    <subcellularLocation>
        <location evidence="1">Nucleus</location>
    </subcellularLocation>
</comment>
<comment type="similarity">
    <text evidence="3">Belongs to the DNA mismatch repair MutL/HexB family.</text>
</comment>
<feature type="chain" id="PRO_0000331655" description="DNA mismatch repair protein Mlh1">
    <location>
        <begin position="1"/>
        <end position="884"/>
    </location>
</feature>
<feature type="region of interest" description="Disordered" evidence="2">
    <location>
        <begin position="1"/>
        <end position="21"/>
    </location>
</feature>
<feature type="region of interest" description="Disordered" evidence="2">
    <location>
        <begin position="297"/>
        <end position="318"/>
    </location>
</feature>
<feature type="region of interest" description="Disordered" evidence="2">
    <location>
        <begin position="442"/>
        <end position="522"/>
    </location>
</feature>
<feature type="region of interest" description="Disordered" evidence="2">
    <location>
        <begin position="544"/>
        <end position="605"/>
    </location>
</feature>
<feature type="compositionally biased region" description="Low complexity" evidence="2">
    <location>
        <begin position="446"/>
        <end position="472"/>
    </location>
</feature>
<feature type="compositionally biased region" description="Basic and acidic residues" evidence="2">
    <location>
        <begin position="473"/>
        <end position="489"/>
    </location>
</feature>
<feature type="compositionally biased region" description="Low complexity" evidence="2">
    <location>
        <begin position="577"/>
        <end position="590"/>
    </location>
</feature>
<protein>
    <recommendedName>
        <fullName>DNA mismatch repair protein Mlh1</fullName>
    </recommendedName>
    <alternativeName>
        <fullName>MutL protein homolog 1</fullName>
    </alternativeName>
</protein>
<proteinExistence type="inferred from homology"/>
<organism>
    <name type="scientific">Dictyostelium discoideum</name>
    <name type="common">Social amoeba</name>
    <dbReference type="NCBI Taxonomy" id="44689"/>
    <lineage>
        <taxon>Eukaryota</taxon>
        <taxon>Amoebozoa</taxon>
        <taxon>Evosea</taxon>
        <taxon>Eumycetozoa</taxon>
        <taxon>Dictyostelia</taxon>
        <taxon>Dictyosteliales</taxon>
        <taxon>Dictyosteliaceae</taxon>
        <taxon>Dictyostelium</taxon>
    </lineage>
</organism>
<evidence type="ECO:0000250" key="1"/>
<evidence type="ECO:0000256" key="2">
    <source>
        <dbReference type="SAM" id="MobiDB-lite"/>
    </source>
</evidence>
<evidence type="ECO:0000305" key="3"/>
<sequence length="884" mass="98753">MDFLKSLPPLQTTDSNSTTAAVNTTTTTATNTATTTATNTATTTTTTTTTNLNNLINESKKKIHRLTQEVVNKISAGEVIQRPSNALKELLENCLDAKSTTITVTVKDGGMKFLQIQDNGSGIRLEDMGIVCERFTTSKLTKFEDLRSIQSFGFRGEALSSISHVSHLKILTKTADSPCAYRACYLNGKLTPPSPNEQSSDPKPCAGVNGTQITVEDLFFNTPSRKNVLKNTVDEHSRIVLLMKKYAINNPTVSFILKKQGDPTPEVHTSGGQNSLEKDVIGSLYGTDLSKELKIITIDPNNPNPNNDDDDNISGSQIKNSNLNRLDFTMKGFFSSTNYNSKKINFILFINGRLVDSKNLKTGLEQVYSKYLPKGTHPFMFIRLLVPPKNIDVNIHPTKSEVKILHEEQIIEFIQQKVDQELSISSNSKTFSTQILLPGFDQDNVSSSQKKQKNSQSSSTQTKSTNNNNNPTSRKEPIEYAKDKIRSDSKSQTLDAFLNPMDYNNNNDSSIDDNDGSGIGRYDDVDGSAGAAGAGGKFNDNLIFNDNSENEAPRDIDNPLSSVTPIKSKEQRQQQSTTTTTTTTTTTATTKSNSPASKNDIKKLQEHTFITPRKTRKYKQVELTSIKTLISEFQSNVHDGLKEFFNDCVFVGCLDHSYALVQFGKKLYLINLENITKELFYQLSLLRFSDFDSIKFSQSLSIYSLLLVSLDSPLSGWMESDGPKDKIADYLTKLLISKKELLNEYFSIEINEDGELVGIPQVLDHYVPCTDNLPIFLLKLATEVEWEFEKECFAGIVKEISSFFKIEPSFLKLRDTQVNNQQQTNSTTTTNNINFIKKDGKEWIIQHLIFPAFRKLSPPKKFANDGSVIQITTLDNLYKVFERC</sequence>
<keyword id="KW-0131">Cell cycle</keyword>
<keyword id="KW-0227">DNA damage</keyword>
<keyword id="KW-0234">DNA repair</keyword>
<keyword id="KW-0539">Nucleus</keyword>
<keyword id="KW-1185">Reference proteome</keyword>